<comment type="function">
    <text evidence="9 11 13 15 18 19 24">Cysteine protease that plays a role in immunity, senescence, and biotic and abiotic stresses (Probable). Involved in immunity against the necrotrophic fungal pathogen Botrytis cinerea (PubMed:22238602). Involved in elicitor-stimulated programmed cell death (PCD). During infection by the necrotrophic fungal pathogen Botrytis cinerea, functions as a PCD-promoting protease that is released from the ER body or vacuole to the cytoplasm (PubMed:23398119). Accumulates in endoplasmic reticulum-derived bodies in epidermal cells and may participate in cell death in stressed or injured cells (PubMed:11577182). Involved in water stress-induced cell death through its protease activity that is released to the cytoplasm after vacuolar collapse (PubMed:26884487). Possesses protease activity in vitro and is involved in cell death in the transmitting tract and septum epidermis during flower development (PubMed:26160583). Possesses peptide ligase activity. Can ligate peptides to unmodified N-termini of acceptor proteins. Probably ligates through a thioester intermediate (PubMed:18660805).</text>
</comment>
<comment type="activity regulation">
    <text evidence="18">Inhibited by the cysteine protease inhibitor E64 (L-trans-epoxysuccinyl-leucylamide-(4-guanido)-butane).</text>
</comment>
<comment type="subunit">
    <text evidence="12 15 16 17 18 20">Interacts with SERPIN1 (PubMed:20181955, PubMed:23398119). Interacts with PRN2 (PubMed:24947605). Interacts with WSCP (PubMed:26016527, PubMed:26160583). Interacts with TZF4, TZF5 and TZF6 (PubMed:26978070).</text>
</comment>
<comment type="interaction">
    <interactant intactId="EBI-1993101">
        <id>P43297</id>
    </interactant>
    <interactant intactId="EBI-449394">
        <id>Q9XI01</id>
        <label>PDIL1-1</label>
    </interactant>
    <organismsDiffer>false</organismsDiffer>
    <experiments>4</experiments>
</comment>
<comment type="subcellular location">
    <subcellularLocation>
        <location evidence="9 10 15">Vacuole</location>
    </subcellularLocation>
    <subcellularLocation>
        <location evidence="14">Golgi apparatus</location>
    </subcellularLocation>
    <subcellularLocation>
        <location evidence="20">Cytoplasm</location>
        <location evidence="20">Stress granule</location>
    </subcellularLocation>
    <subcellularLocation>
        <location evidence="20">Cytoplasm</location>
        <location evidence="20">P-body</location>
    </subcellularLocation>
    <text evidence="9 14">Specifically accumulates in body structures that directly bud from the endoplasmic reticulum and fuse with the vacuole (PubMed:11577182). Passes through the Golgi on its route to the vacuole (PubMed:22396764).</text>
</comment>
<comment type="induction">
    <text evidence="21">By high salt conditions and drought stress.</text>
</comment>
<comment type="disruption phenotype">
    <text evidence="13 14">No visible phenotype under normal growth conditions (PubMed:22238602, PubMed:22396764). Mutant plants show increased susceptibility to infection by the necrotrophic fungal pathogen Botrytis cinerea (PubMed:22238602).</text>
</comment>
<comment type="similarity">
    <text evidence="6 7 8">Belongs to the peptidase C1 family.</text>
</comment>
<reference key="1">
    <citation type="journal article" date="1993" name="Gene">
        <title>Structure and expression of two genes that encode distinct drought-inducible cysteine proteinases in Arabidopsis thaliana.</title>
        <authorList>
            <person name="Koizumi M."/>
            <person name="Yamaguchi-Shinozaki K."/>
            <person name="Tsuji H."/>
            <person name="Shinozaki K."/>
        </authorList>
    </citation>
    <scope>NUCLEOTIDE SEQUENCE [GENOMIC DNA]</scope>
    <scope>INDUCTION</scope>
    <source>
        <strain>cv. Columbia</strain>
    </source>
</reference>
<reference key="2">
    <citation type="journal article" date="2000" name="Nature">
        <title>Sequence and analysis of chromosome 1 of the plant Arabidopsis thaliana.</title>
        <authorList>
            <person name="Theologis A."/>
            <person name="Ecker J.R."/>
            <person name="Palm C.J."/>
            <person name="Federspiel N.A."/>
            <person name="Kaul S."/>
            <person name="White O."/>
            <person name="Alonso J."/>
            <person name="Altafi H."/>
            <person name="Araujo R."/>
            <person name="Bowman C.L."/>
            <person name="Brooks S.Y."/>
            <person name="Buehler E."/>
            <person name="Chan A."/>
            <person name="Chao Q."/>
            <person name="Chen H."/>
            <person name="Cheuk R.F."/>
            <person name="Chin C.W."/>
            <person name="Chung M.K."/>
            <person name="Conn L."/>
            <person name="Conway A.B."/>
            <person name="Conway A.R."/>
            <person name="Creasy T.H."/>
            <person name="Dewar K."/>
            <person name="Dunn P."/>
            <person name="Etgu P."/>
            <person name="Feldblyum T.V."/>
            <person name="Feng J.-D."/>
            <person name="Fong B."/>
            <person name="Fujii C.Y."/>
            <person name="Gill J.E."/>
            <person name="Goldsmith A.D."/>
            <person name="Haas B."/>
            <person name="Hansen N.F."/>
            <person name="Hughes B."/>
            <person name="Huizar L."/>
            <person name="Hunter J.L."/>
            <person name="Jenkins J."/>
            <person name="Johnson-Hopson C."/>
            <person name="Khan S."/>
            <person name="Khaykin E."/>
            <person name="Kim C.J."/>
            <person name="Koo H.L."/>
            <person name="Kremenetskaia I."/>
            <person name="Kurtz D.B."/>
            <person name="Kwan A."/>
            <person name="Lam B."/>
            <person name="Langin-Hooper S."/>
            <person name="Lee A."/>
            <person name="Lee J.M."/>
            <person name="Lenz C.A."/>
            <person name="Li J.H."/>
            <person name="Li Y.-P."/>
            <person name="Lin X."/>
            <person name="Liu S.X."/>
            <person name="Liu Z.A."/>
            <person name="Luros J.S."/>
            <person name="Maiti R."/>
            <person name="Marziali A."/>
            <person name="Militscher J."/>
            <person name="Miranda M."/>
            <person name="Nguyen M."/>
            <person name="Nierman W.C."/>
            <person name="Osborne B.I."/>
            <person name="Pai G."/>
            <person name="Peterson J."/>
            <person name="Pham P.K."/>
            <person name="Rizzo M."/>
            <person name="Rooney T."/>
            <person name="Rowley D."/>
            <person name="Sakano H."/>
            <person name="Salzberg S.L."/>
            <person name="Schwartz J.R."/>
            <person name="Shinn P."/>
            <person name="Southwick A.M."/>
            <person name="Sun H."/>
            <person name="Tallon L.J."/>
            <person name="Tambunga G."/>
            <person name="Toriumi M.J."/>
            <person name="Town C.D."/>
            <person name="Utterback T."/>
            <person name="Van Aken S."/>
            <person name="Vaysberg M."/>
            <person name="Vysotskaia V.S."/>
            <person name="Walker M."/>
            <person name="Wu D."/>
            <person name="Yu G."/>
            <person name="Fraser C.M."/>
            <person name="Venter J.C."/>
            <person name="Davis R.W."/>
        </authorList>
    </citation>
    <scope>NUCLEOTIDE SEQUENCE [LARGE SCALE GENOMIC DNA]</scope>
    <source>
        <strain>cv. Columbia</strain>
    </source>
</reference>
<reference key="3">
    <citation type="journal article" date="2017" name="Plant J.">
        <title>Araport11: a complete reannotation of the Arabidopsis thaliana reference genome.</title>
        <authorList>
            <person name="Cheng C.Y."/>
            <person name="Krishnakumar V."/>
            <person name="Chan A.P."/>
            <person name="Thibaud-Nissen F."/>
            <person name="Schobel S."/>
            <person name="Town C.D."/>
        </authorList>
    </citation>
    <scope>GENOME REANNOTATION</scope>
    <source>
        <strain>cv. Columbia</strain>
    </source>
</reference>
<reference key="4">
    <citation type="journal article" date="2003" name="Science">
        <title>Empirical analysis of transcriptional activity in the Arabidopsis genome.</title>
        <authorList>
            <person name="Yamada K."/>
            <person name="Lim J."/>
            <person name="Dale J.M."/>
            <person name="Chen H."/>
            <person name="Shinn P."/>
            <person name="Palm C.J."/>
            <person name="Southwick A.M."/>
            <person name="Wu H.C."/>
            <person name="Kim C.J."/>
            <person name="Nguyen M."/>
            <person name="Pham P.K."/>
            <person name="Cheuk R.F."/>
            <person name="Karlin-Newmann G."/>
            <person name="Liu S.X."/>
            <person name="Lam B."/>
            <person name="Sakano H."/>
            <person name="Wu T."/>
            <person name="Yu G."/>
            <person name="Miranda M."/>
            <person name="Quach H.L."/>
            <person name="Tripp M."/>
            <person name="Chang C.H."/>
            <person name="Lee J.M."/>
            <person name="Toriumi M.J."/>
            <person name="Chan M.M."/>
            <person name="Tang C.C."/>
            <person name="Onodera C.S."/>
            <person name="Deng J.M."/>
            <person name="Akiyama K."/>
            <person name="Ansari Y."/>
            <person name="Arakawa T."/>
            <person name="Banh J."/>
            <person name="Banno F."/>
            <person name="Bowser L."/>
            <person name="Brooks S.Y."/>
            <person name="Carninci P."/>
            <person name="Chao Q."/>
            <person name="Choy N."/>
            <person name="Enju A."/>
            <person name="Goldsmith A.D."/>
            <person name="Gurjal M."/>
            <person name="Hansen N.F."/>
            <person name="Hayashizaki Y."/>
            <person name="Johnson-Hopson C."/>
            <person name="Hsuan V.W."/>
            <person name="Iida K."/>
            <person name="Karnes M."/>
            <person name="Khan S."/>
            <person name="Koesema E."/>
            <person name="Ishida J."/>
            <person name="Jiang P.X."/>
            <person name="Jones T."/>
            <person name="Kawai J."/>
            <person name="Kamiya A."/>
            <person name="Meyers C."/>
            <person name="Nakajima M."/>
            <person name="Narusaka M."/>
            <person name="Seki M."/>
            <person name="Sakurai T."/>
            <person name="Satou M."/>
            <person name="Tamse R."/>
            <person name="Vaysberg M."/>
            <person name="Wallender E.K."/>
            <person name="Wong C."/>
            <person name="Yamamura Y."/>
            <person name="Yuan S."/>
            <person name="Shinozaki K."/>
            <person name="Davis R.W."/>
            <person name="Theologis A."/>
            <person name="Ecker J.R."/>
        </authorList>
    </citation>
    <scope>NUCLEOTIDE SEQUENCE [LARGE SCALE MRNA]</scope>
    <source>
        <strain>cv. Columbia</strain>
    </source>
</reference>
<reference key="5">
    <citation type="journal article" date="2001" name="Plant Cell Physiol.">
        <title>A proteinase-storing body that prepares for cell death or stresses in the epidermal cells of Arabidopsis.</title>
        <authorList>
            <person name="Hayashi Y."/>
            <person name="Yamada K."/>
            <person name="Shimada T."/>
            <person name="Matsushima R."/>
            <person name="Nishizawa N.K."/>
            <person name="Nishimura M."/>
            <person name="Hara-Nishimura I."/>
        </authorList>
    </citation>
    <scope>FUNCTION</scope>
    <scope>SUBCELLULAR LOCATION</scope>
</reference>
<reference key="6">
    <citation type="journal article" date="2001" name="Plant Physiol.">
        <title>A slow maturation of a cysteine protease with a granulin domain in the vacuoles of senescing Arabidopsis leaves.</title>
        <authorList>
            <person name="Yamada K."/>
            <person name="Matsushima R."/>
            <person name="Nishimura M."/>
            <person name="Hara-Nishimura I."/>
        </authorList>
    </citation>
    <scope>SUBCELLULAR LOCATION</scope>
</reference>
<reference key="7">
    <citation type="journal article" date="2008" name="Nat. Chem. Biol.">
        <title>Beta-lactone probes identify a papain-like peptide ligase in Arabidopsis thaliana.</title>
        <authorList>
            <person name="Wang Z."/>
            <person name="Gu C."/>
            <person name="Colby T."/>
            <person name="Shindo T."/>
            <person name="Balamurugan R."/>
            <person name="Waldmann H."/>
            <person name="Kaiser M."/>
            <person name="van der Hoorn R.A."/>
        </authorList>
    </citation>
    <scope>IDENTIFICATION BY MASS SPECTROMETRY</scope>
    <scope>FUNCTION</scope>
</reference>
<reference key="8">
    <citation type="journal article" date="2010" name="J. Biol. Chem.">
        <title>Arabidopsis AtSerpin1, crystal structure and in vivo interaction with its target protease RESPONSIVE TO DESICCATION-21 (RD21).</title>
        <authorList>
            <person name="Lampl N."/>
            <person name="Budai-Hadrian O."/>
            <person name="Davydov O."/>
            <person name="Joss T.V."/>
            <person name="Harrop S.J."/>
            <person name="Curmi P.M."/>
            <person name="Roberts T.H."/>
            <person name="Fluhr R."/>
        </authorList>
    </citation>
    <scope>INTERACTION WITH SERPIN1</scope>
</reference>
<reference key="9">
    <citation type="journal article" date="2012" name="PLoS ONE">
        <title>A role in immunity for Arabidopsis cysteine protease RD21, the ortholog of the tomato immune protease C14.</title>
        <authorList>
            <person name="Shindo T."/>
            <person name="Misas-Villamil J.C."/>
            <person name="Hoerger A.C."/>
            <person name="Song J."/>
            <person name="van der Hoorn R.A."/>
        </authorList>
    </citation>
    <scope>FUNCTION</scope>
    <scope>DISRUPTION PHENOTYPE</scope>
</reference>
<reference key="10">
    <citation type="journal article" date="2012" name="PLoS ONE">
        <title>Post-translational regulation and trafficking of the granulin-containing protease RD21 of Arabidopsis thaliana.</title>
        <authorList>
            <person name="Gu C."/>
            <person name="Shabab M."/>
            <person name="Strasser R."/>
            <person name="Wolters P.J."/>
            <person name="Shindo T."/>
            <person name="Niemer M."/>
            <person name="Kaschani F."/>
            <person name="Mach L."/>
            <person name="van der Hoorn R.A."/>
        </authorList>
    </citation>
    <scope>IDENTIFICATION BY MASS SPECTROMETRY</scope>
    <scope>FUNCTION</scope>
    <scope>ACTIVE SITE</scope>
    <scope>SUBCELLULAR LOCATION</scope>
    <scope>PROTEOLYTIC PROCESSING</scope>
    <scope>MUTAGENESIS OF CYS-161; HIS-297 AND ASN-317</scope>
    <scope>DISRUPTION PHENOTYPE</scope>
</reference>
<reference key="11">
    <citation type="journal article" date="2013" name="Plant J.">
        <title>Set-point control of RD21 protease activity by AtSerpin1 controls cell death in Arabidopsis.</title>
        <authorList>
            <person name="Lampl N."/>
            <person name="Alkan N."/>
            <person name="Davydov O."/>
            <person name="Fluhr R."/>
        </authorList>
    </citation>
    <scope>FUNCTION</scope>
    <scope>INTERACTION WITH SERPIN1</scope>
    <scope>SUBCELLULAR LOCATION</scope>
</reference>
<reference key="12">
    <citation type="journal article" date="2014" name="Plant J.">
        <title>PIRIN2 stabilizes cysteine protease XCP2 and increases susceptibility to the vascular pathogen Ralstonia solanacearum in Arabidopsis.</title>
        <authorList>
            <person name="Zhang B."/>
            <person name="Tremousaygue D."/>
            <person name="Denance N."/>
            <person name="van Esse H.P."/>
            <person name="Hoerger A.C."/>
            <person name="Dabos P."/>
            <person name="Goffner D."/>
            <person name="Thomma B.P."/>
            <person name="van der Hoorn R.A."/>
            <person name="Tuominen H."/>
        </authorList>
    </citation>
    <scope>INTERACTION WITH PRN2</scope>
</reference>
<reference key="13">
    <citation type="journal article" date="2015" name="J. Exp. Bot.">
        <title>A Kunitz-type protease inhibitor regulates programmed cell death during flower development in Arabidopsis thaliana.</title>
        <authorList>
            <person name="Boex-Fontvieille E."/>
            <person name="Rustgi S."/>
            <person name="Reinbothe S."/>
            <person name="Reinbothe C."/>
        </authorList>
    </citation>
    <scope>FUNCTION</scope>
    <scope>ACTIVITY REGULATION</scope>
    <scope>INTERACTION WITH WSCP</scope>
</reference>
<reference key="14">
    <citation type="journal article" date="2015" name="Proc. Natl. Acad. Sci. U.S.A.">
        <title>Water-soluble chlorophyll protein is involved in herbivore resistance activation during greening of Arabidopsis thaliana.</title>
        <authorList>
            <person name="Boex-Fontvieille E."/>
            <person name="Rustgi S."/>
            <person name="von Wettstein D."/>
            <person name="Reinbothe S."/>
            <person name="Reinbothe C."/>
        </authorList>
    </citation>
    <scope>INTERACTION WITH WSCP</scope>
</reference>
<reference key="15">
    <citation type="journal article" date="2016" name="Plant Physiol.">
        <title>Singlet oxygen induced membrane disruption and serpin-protease balance in vacuolar driven cell death in Arabidopsis thaliana.</title>
        <authorList>
            <person name="Koh E."/>
            <person name="Carmieli R."/>
            <person name="Mor A."/>
            <person name="Fluhr R."/>
        </authorList>
    </citation>
    <scope>FUNCTION</scope>
</reference>
<reference key="16">
    <citation type="journal article" date="2016" name="PLoS ONE">
        <title>Plant tandem CCCH zinc finger proteins interact with ABA, drought, and stress response regulators in processing-bodies and stress granules.</title>
        <authorList>
            <person name="Bogamuwa S."/>
            <person name="Jang J.C."/>
        </authorList>
    </citation>
    <scope>INTERACTION WITH TZF4; TZF5 AND TZF6</scope>
    <scope>SUBCELLULAR LOCATION</scope>
</reference>
<organism>
    <name type="scientific">Arabidopsis thaliana</name>
    <name type="common">Mouse-ear cress</name>
    <dbReference type="NCBI Taxonomy" id="3702"/>
    <lineage>
        <taxon>Eukaryota</taxon>
        <taxon>Viridiplantae</taxon>
        <taxon>Streptophyta</taxon>
        <taxon>Embryophyta</taxon>
        <taxon>Tracheophyta</taxon>
        <taxon>Spermatophyta</taxon>
        <taxon>Magnoliopsida</taxon>
        <taxon>eudicotyledons</taxon>
        <taxon>Gunneridae</taxon>
        <taxon>Pentapetalae</taxon>
        <taxon>rosids</taxon>
        <taxon>malvids</taxon>
        <taxon>Brassicales</taxon>
        <taxon>Brassicaceae</taxon>
        <taxon>Camelineae</taxon>
        <taxon>Arabidopsis</taxon>
    </lineage>
</organism>
<dbReference type="EC" id="3.4.22.-" evidence="2"/>
<dbReference type="EMBL" id="D13043">
    <property type="protein sequence ID" value="BAA02374.1"/>
    <property type="molecule type" value="Genomic_DNA"/>
</dbReference>
<dbReference type="EMBL" id="AC083835">
    <property type="protein sequence ID" value="AAG50628.1"/>
    <property type="molecule type" value="Genomic_DNA"/>
</dbReference>
<dbReference type="EMBL" id="CP002684">
    <property type="protein sequence ID" value="AEE32135.1"/>
    <property type="molecule type" value="Genomic_DNA"/>
</dbReference>
<dbReference type="EMBL" id="AY072130">
    <property type="protein sequence ID" value="AAL59952.1"/>
    <property type="molecule type" value="mRNA"/>
</dbReference>
<dbReference type="EMBL" id="AY133781">
    <property type="protein sequence ID" value="AAM91715.1"/>
    <property type="molecule type" value="mRNA"/>
</dbReference>
<dbReference type="PIR" id="JN0719">
    <property type="entry name" value="JN0719"/>
</dbReference>
<dbReference type="RefSeq" id="NP_564497.1">
    <property type="nucleotide sequence ID" value="NM_103612.3"/>
</dbReference>
<dbReference type="SMR" id="P43297"/>
<dbReference type="BioGRID" id="26347">
    <property type="interactions" value="12"/>
</dbReference>
<dbReference type="FunCoup" id="P43297">
    <property type="interactions" value="1063"/>
</dbReference>
<dbReference type="IntAct" id="P43297">
    <property type="interactions" value="1"/>
</dbReference>
<dbReference type="STRING" id="3702.P43297"/>
<dbReference type="MEROPS" id="C01.064"/>
<dbReference type="GlyCosmos" id="P43297">
    <property type="glycosylation" value="2 sites, No reported glycans"/>
</dbReference>
<dbReference type="GlyGen" id="P43297">
    <property type="glycosylation" value="2 sites"/>
</dbReference>
<dbReference type="PaxDb" id="3702-AT1G47128.1"/>
<dbReference type="ProteomicsDB" id="236213"/>
<dbReference type="EnsemblPlants" id="AT1G47128.1">
    <property type="protein sequence ID" value="AT1G47128.1"/>
    <property type="gene ID" value="AT1G47128"/>
</dbReference>
<dbReference type="GeneID" id="841122"/>
<dbReference type="Gramene" id="AT1G47128.1">
    <property type="protein sequence ID" value="AT1G47128.1"/>
    <property type="gene ID" value="AT1G47128"/>
</dbReference>
<dbReference type="KEGG" id="ath:AT1G47128"/>
<dbReference type="Araport" id="AT1G47128"/>
<dbReference type="TAIR" id="AT1G47128">
    <property type="gene designation" value="RD21A"/>
</dbReference>
<dbReference type="eggNOG" id="KOG1543">
    <property type="taxonomic scope" value="Eukaryota"/>
</dbReference>
<dbReference type="eggNOG" id="KOG4296">
    <property type="taxonomic scope" value="Eukaryota"/>
</dbReference>
<dbReference type="HOGENOM" id="CLU_012184_0_1_1"/>
<dbReference type="InParanoid" id="P43297"/>
<dbReference type="OMA" id="WSQGRKN"/>
<dbReference type="OrthoDB" id="10253408at2759"/>
<dbReference type="PhylomeDB" id="P43297"/>
<dbReference type="CD-CODE" id="24475C75">
    <property type="entry name" value="Stress granule"/>
</dbReference>
<dbReference type="CD-CODE" id="4299E36E">
    <property type="entry name" value="Nucleolus"/>
</dbReference>
<dbReference type="CD-CODE" id="60F64496">
    <property type="entry name" value="P-body"/>
</dbReference>
<dbReference type="PRO" id="PR:P43297"/>
<dbReference type="Proteomes" id="UP000006548">
    <property type="component" value="Chromosome 1"/>
</dbReference>
<dbReference type="ExpressionAtlas" id="P43297">
    <property type="expression patterns" value="baseline and differential"/>
</dbReference>
<dbReference type="GO" id="GO:0048046">
    <property type="term" value="C:apoplast"/>
    <property type="evidence" value="ECO:0007005"/>
    <property type="project" value="TAIR"/>
</dbReference>
<dbReference type="GO" id="GO:0005737">
    <property type="term" value="C:cytoplasm"/>
    <property type="evidence" value="ECO:0000353"/>
    <property type="project" value="TAIR"/>
</dbReference>
<dbReference type="GO" id="GO:0010494">
    <property type="term" value="C:cytoplasmic stress granule"/>
    <property type="evidence" value="ECO:0000314"/>
    <property type="project" value="TAIR"/>
</dbReference>
<dbReference type="GO" id="GO:0005794">
    <property type="term" value="C:Golgi apparatus"/>
    <property type="evidence" value="ECO:0007669"/>
    <property type="project" value="UniProtKB-SubCell"/>
</dbReference>
<dbReference type="GO" id="GO:0005634">
    <property type="term" value="C:nucleus"/>
    <property type="evidence" value="ECO:0000353"/>
    <property type="project" value="TAIR"/>
</dbReference>
<dbReference type="GO" id="GO:0000932">
    <property type="term" value="C:P-body"/>
    <property type="evidence" value="ECO:0000314"/>
    <property type="project" value="TAIR"/>
</dbReference>
<dbReference type="GO" id="GO:0000325">
    <property type="term" value="C:plant-type vacuole"/>
    <property type="evidence" value="ECO:0007005"/>
    <property type="project" value="TAIR"/>
</dbReference>
<dbReference type="GO" id="GO:0005886">
    <property type="term" value="C:plasma membrane"/>
    <property type="evidence" value="ECO:0000353"/>
    <property type="project" value="TAIR"/>
</dbReference>
<dbReference type="GO" id="GO:0009506">
    <property type="term" value="C:plasmodesma"/>
    <property type="evidence" value="ECO:0007005"/>
    <property type="project" value="TAIR"/>
</dbReference>
<dbReference type="GO" id="GO:0099503">
    <property type="term" value="C:secretory vesicle"/>
    <property type="evidence" value="ECO:0007005"/>
    <property type="project" value="TAIR"/>
</dbReference>
<dbReference type="GO" id="GO:0005773">
    <property type="term" value="C:vacuole"/>
    <property type="evidence" value="ECO:0007005"/>
    <property type="project" value="TAIR"/>
</dbReference>
<dbReference type="GO" id="GO:0008234">
    <property type="term" value="F:cysteine-type peptidase activity"/>
    <property type="evidence" value="ECO:0000314"/>
    <property type="project" value="UniProtKB"/>
</dbReference>
<dbReference type="GO" id="GO:0008233">
    <property type="term" value="F:peptidase activity"/>
    <property type="evidence" value="ECO:0000314"/>
    <property type="project" value="TAIR"/>
</dbReference>
<dbReference type="GO" id="GO:0050832">
    <property type="term" value="P:defense response to fungus"/>
    <property type="evidence" value="ECO:0000315"/>
    <property type="project" value="TAIR"/>
</dbReference>
<dbReference type="GO" id="GO:0016567">
    <property type="term" value="P:protein ubiquitination"/>
    <property type="evidence" value="ECO:0000314"/>
    <property type="project" value="TAIR"/>
</dbReference>
<dbReference type="GO" id="GO:0006508">
    <property type="term" value="P:proteolysis"/>
    <property type="evidence" value="ECO:0000315"/>
    <property type="project" value="TAIR"/>
</dbReference>
<dbReference type="GO" id="GO:0090333">
    <property type="term" value="P:regulation of stomatal closure"/>
    <property type="evidence" value="ECO:0000315"/>
    <property type="project" value="TAIR"/>
</dbReference>
<dbReference type="CDD" id="cd02248">
    <property type="entry name" value="Peptidase_C1A"/>
    <property type="match status" value="1"/>
</dbReference>
<dbReference type="FunFam" id="2.10.25.160:FF:000002">
    <property type="entry name" value="Cysteine protease 1"/>
    <property type="match status" value="1"/>
</dbReference>
<dbReference type="FunFam" id="3.90.70.10:FF:000068">
    <property type="entry name" value="Cysteine protease 1"/>
    <property type="match status" value="1"/>
</dbReference>
<dbReference type="Gene3D" id="3.90.70.10">
    <property type="entry name" value="Cysteine proteinases"/>
    <property type="match status" value="1"/>
</dbReference>
<dbReference type="Gene3D" id="2.10.25.160">
    <property type="entry name" value="Granulin"/>
    <property type="match status" value="1"/>
</dbReference>
<dbReference type="InterPro" id="IPR000118">
    <property type="entry name" value="Granulin"/>
</dbReference>
<dbReference type="InterPro" id="IPR037277">
    <property type="entry name" value="Granulin_sf"/>
</dbReference>
<dbReference type="InterPro" id="IPR038765">
    <property type="entry name" value="Papain-like_cys_pep_sf"/>
</dbReference>
<dbReference type="InterPro" id="IPR025661">
    <property type="entry name" value="Pept_asp_AS"/>
</dbReference>
<dbReference type="InterPro" id="IPR000169">
    <property type="entry name" value="Pept_cys_AS"/>
</dbReference>
<dbReference type="InterPro" id="IPR025660">
    <property type="entry name" value="Pept_his_AS"/>
</dbReference>
<dbReference type="InterPro" id="IPR013128">
    <property type="entry name" value="Peptidase_C1A"/>
</dbReference>
<dbReference type="InterPro" id="IPR000668">
    <property type="entry name" value="Peptidase_C1A_C"/>
</dbReference>
<dbReference type="InterPro" id="IPR039417">
    <property type="entry name" value="Peptidase_C1A_papain-like"/>
</dbReference>
<dbReference type="InterPro" id="IPR013201">
    <property type="entry name" value="Prot_inhib_I29"/>
</dbReference>
<dbReference type="PANTHER" id="PTHR12411">
    <property type="entry name" value="CYSTEINE PROTEASE FAMILY C1-RELATED"/>
    <property type="match status" value="1"/>
</dbReference>
<dbReference type="Pfam" id="PF00396">
    <property type="entry name" value="Granulin"/>
    <property type="match status" value="1"/>
</dbReference>
<dbReference type="Pfam" id="PF08246">
    <property type="entry name" value="Inhibitor_I29"/>
    <property type="match status" value="1"/>
</dbReference>
<dbReference type="Pfam" id="PF00112">
    <property type="entry name" value="Peptidase_C1"/>
    <property type="match status" value="1"/>
</dbReference>
<dbReference type="PRINTS" id="PR00705">
    <property type="entry name" value="PAPAIN"/>
</dbReference>
<dbReference type="SMART" id="SM00277">
    <property type="entry name" value="GRAN"/>
    <property type="match status" value="1"/>
</dbReference>
<dbReference type="SMART" id="SM00848">
    <property type="entry name" value="Inhibitor_I29"/>
    <property type="match status" value="1"/>
</dbReference>
<dbReference type="SMART" id="SM00645">
    <property type="entry name" value="Pept_C1"/>
    <property type="match status" value="1"/>
</dbReference>
<dbReference type="SUPFAM" id="SSF54001">
    <property type="entry name" value="Cysteine proteinases"/>
    <property type="match status" value="1"/>
</dbReference>
<dbReference type="SUPFAM" id="SSF57277">
    <property type="entry name" value="Granulin repeat"/>
    <property type="match status" value="1"/>
</dbReference>
<dbReference type="PROSITE" id="PS00640">
    <property type="entry name" value="THIOL_PROTEASE_ASN"/>
    <property type="match status" value="1"/>
</dbReference>
<dbReference type="PROSITE" id="PS00139">
    <property type="entry name" value="THIOL_PROTEASE_CYS"/>
    <property type="match status" value="1"/>
</dbReference>
<dbReference type="PROSITE" id="PS00639">
    <property type="entry name" value="THIOL_PROTEASE_HIS"/>
    <property type="match status" value="1"/>
</dbReference>
<name>RD21A_ARATH</name>
<evidence type="ECO:0000250" key="1">
    <source>
        <dbReference type="UniProtKB" id="P25777"/>
    </source>
</evidence>
<evidence type="ECO:0000250" key="2">
    <source>
        <dbReference type="UniProtKB" id="P80884"/>
    </source>
</evidence>
<evidence type="ECO:0000250" key="3">
    <source>
        <dbReference type="UniProtKB" id="P84346"/>
    </source>
</evidence>
<evidence type="ECO:0000255" key="4"/>
<evidence type="ECO:0000255" key="5">
    <source>
        <dbReference type="PROSITE-ProRule" id="PRU00498"/>
    </source>
</evidence>
<evidence type="ECO:0000255" key="6">
    <source>
        <dbReference type="PROSITE-ProRule" id="PRU10088"/>
    </source>
</evidence>
<evidence type="ECO:0000255" key="7">
    <source>
        <dbReference type="PROSITE-ProRule" id="PRU10089"/>
    </source>
</evidence>
<evidence type="ECO:0000255" key="8">
    <source>
        <dbReference type="PROSITE-ProRule" id="PRU10090"/>
    </source>
</evidence>
<evidence type="ECO:0000269" key="9">
    <source>
    </source>
</evidence>
<evidence type="ECO:0000269" key="10">
    <source>
    </source>
</evidence>
<evidence type="ECO:0000269" key="11">
    <source>
    </source>
</evidence>
<evidence type="ECO:0000269" key="12">
    <source>
    </source>
</evidence>
<evidence type="ECO:0000269" key="13">
    <source>
    </source>
</evidence>
<evidence type="ECO:0000269" key="14">
    <source>
    </source>
</evidence>
<evidence type="ECO:0000269" key="15">
    <source>
    </source>
</evidence>
<evidence type="ECO:0000269" key="16">
    <source>
    </source>
</evidence>
<evidence type="ECO:0000269" key="17">
    <source>
    </source>
</evidence>
<evidence type="ECO:0000269" key="18">
    <source>
    </source>
</evidence>
<evidence type="ECO:0000269" key="19">
    <source>
    </source>
</evidence>
<evidence type="ECO:0000269" key="20">
    <source>
    </source>
</evidence>
<evidence type="ECO:0000269" key="21">
    <source>
    </source>
</evidence>
<evidence type="ECO:0000303" key="22">
    <source>
    </source>
</evidence>
<evidence type="ECO:0000305" key="23"/>
<evidence type="ECO:0000305" key="24">
    <source>
    </source>
</evidence>
<evidence type="ECO:0000312" key="25">
    <source>
        <dbReference type="Araport" id="AT1G47128"/>
    </source>
</evidence>
<evidence type="ECO:0000312" key="26">
    <source>
        <dbReference type="EMBL" id="AAG50628.1"/>
    </source>
</evidence>
<protein>
    <recommendedName>
        <fullName evidence="23">Cysteine proteinase RD21A</fullName>
        <ecNumber evidence="2">3.4.22.-</ecNumber>
    </recommendedName>
    <alternativeName>
        <fullName evidence="22">Protein RESPONSIVE TO DEHYDRATION 21</fullName>
        <shortName evidence="22">RD21</shortName>
    </alternativeName>
</protein>
<proteinExistence type="evidence at protein level"/>
<sequence>MGFLKPTMAILFLAMVAVSSAVDMSIISYDEKHGVSTTGGRSEAEVMSIYEAWLVKHGKAQSQNSLVEKDRRFEIFKDNLRFVDEHNEKNLSYRLGLTRFADLTNDEYRSKYLGAKMEKKGERRTSLRYEARVGDELPESIDWRKKGAVAEVKDQGGCGSCWAFSTIGAVEGINQIVTGDLITLSEQELVDCDTSYNEGCNGGLMDYAFEFIIKNGGIDTDKDYPYKGVDGTCDQIRKNAKVVTIDSYEDVPTYSEESLKKAVAHQPISIAIEAGGRAFQLYDSGIFDGSCGTQLDHGVVAVGYGTENGKDYWIVRNSWGKSWGESGYLRMARNIASSSGKCGIAIEPSYPIKNGENPPNPGPSPPSPIKPPTQCDSYYTCPESNTCCCLFEYGKYCFAWGCCPLEAATCCDDNYSCCPHEYPVCDLDQGTCLLSKNSPFSVKALKRKPATPFWSQGRKNIA</sequence>
<keyword id="KW-0963">Cytoplasm</keyword>
<keyword id="KW-1015">Disulfide bond</keyword>
<keyword id="KW-0325">Glycoprotein</keyword>
<keyword id="KW-0333">Golgi apparatus</keyword>
<keyword id="KW-0378">Hydrolase</keyword>
<keyword id="KW-0645">Protease</keyword>
<keyword id="KW-1185">Reference proteome</keyword>
<keyword id="KW-0732">Signal</keyword>
<keyword id="KW-0788">Thiol protease</keyword>
<keyword id="KW-0926">Vacuole</keyword>
<accession>P43297</accession>
<gene>
    <name evidence="22" type="primary">RD21A</name>
    <name evidence="25" type="ordered locus">At1g47128</name>
    <name evidence="26" type="ORF">F2G19.31</name>
</gene>
<feature type="signal peptide" evidence="4">
    <location>
        <begin position="1"/>
        <end position="21"/>
    </location>
</feature>
<feature type="propeptide" id="PRO_0000026457" description="Activation peptide" evidence="24">
    <location>
        <begin position="22"/>
        <end position="136"/>
    </location>
</feature>
<feature type="chain" id="PRO_0000026458" description="Cysteine proteinase RD21A">
    <location>
        <begin position="137"/>
        <end position="352"/>
    </location>
</feature>
<feature type="propeptide" id="PRO_0000046018" description="Removed in mature form" evidence="24">
    <location>
        <begin position="353"/>
        <end position="462"/>
    </location>
</feature>
<feature type="active site" evidence="6 14">
    <location>
        <position position="161"/>
    </location>
</feature>
<feature type="active site" evidence="7 14">
    <location>
        <position position="297"/>
    </location>
</feature>
<feature type="active site" evidence="8 14">
    <location>
        <position position="317"/>
    </location>
</feature>
<feature type="glycosylation site" description="N-linked (GlcNAc...) asparagine" evidence="5">
    <location>
        <position position="90"/>
    </location>
</feature>
<feature type="glycosylation site" description="N-linked (GlcNAc...) asparagine" evidence="5">
    <location>
        <position position="414"/>
    </location>
</feature>
<feature type="disulfide bond" evidence="3">
    <location>
        <begin position="158"/>
        <end position="200"/>
    </location>
</feature>
<feature type="disulfide bond" evidence="3">
    <location>
        <begin position="192"/>
        <end position="233"/>
    </location>
</feature>
<feature type="disulfide bond" evidence="3">
    <location>
        <begin position="291"/>
        <end position="342"/>
    </location>
</feature>
<feature type="disulfide bond" evidence="1">
    <location>
        <begin position="375"/>
        <end position="387"/>
    </location>
</feature>
<feature type="disulfide bond" evidence="1">
    <location>
        <begin position="381"/>
        <end position="402"/>
    </location>
</feature>
<feature type="mutagenesis site" description="Loss of protease activity." evidence="14">
    <original>C</original>
    <variation>A</variation>
    <location>
        <position position="161"/>
    </location>
</feature>
<feature type="mutagenesis site" description="Loss of protease activity." evidence="14">
    <original>H</original>
    <variation>A</variation>
    <location>
        <position position="297"/>
    </location>
</feature>
<feature type="mutagenesis site" description="Reduces protease activity." evidence="14">
    <original>N</original>
    <variation>A</variation>
    <location>
        <position position="317"/>
    </location>
</feature>